<accession>Q3UM83</accession>
<accession>Q3TE30</accession>
<reference key="1">
    <citation type="journal article" date="2005" name="Science">
        <title>The transcriptional landscape of the mammalian genome.</title>
        <authorList>
            <person name="Carninci P."/>
            <person name="Kasukawa T."/>
            <person name="Katayama S."/>
            <person name="Gough J."/>
            <person name="Frith M.C."/>
            <person name="Maeda N."/>
            <person name="Oyama R."/>
            <person name="Ravasi T."/>
            <person name="Lenhard B."/>
            <person name="Wells C."/>
            <person name="Kodzius R."/>
            <person name="Shimokawa K."/>
            <person name="Bajic V.B."/>
            <person name="Brenner S.E."/>
            <person name="Batalov S."/>
            <person name="Forrest A.R."/>
            <person name="Zavolan M."/>
            <person name="Davis M.J."/>
            <person name="Wilming L.G."/>
            <person name="Aidinis V."/>
            <person name="Allen J.E."/>
            <person name="Ambesi-Impiombato A."/>
            <person name="Apweiler R."/>
            <person name="Aturaliya R.N."/>
            <person name="Bailey T.L."/>
            <person name="Bansal M."/>
            <person name="Baxter L."/>
            <person name="Beisel K.W."/>
            <person name="Bersano T."/>
            <person name="Bono H."/>
            <person name="Chalk A.M."/>
            <person name="Chiu K.P."/>
            <person name="Choudhary V."/>
            <person name="Christoffels A."/>
            <person name="Clutterbuck D.R."/>
            <person name="Crowe M.L."/>
            <person name="Dalla E."/>
            <person name="Dalrymple B.P."/>
            <person name="de Bono B."/>
            <person name="Della Gatta G."/>
            <person name="di Bernardo D."/>
            <person name="Down T."/>
            <person name="Engstrom P."/>
            <person name="Fagiolini M."/>
            <person name="Faulkner G."/>
            <person name="Fletcher C.F."/>
            <person name="Fukushima T."/>
            <person name="Furuno M."/>
            <person name="Futaki S."/>
            <person name="Gariboldi M."/>
            <person name="Georgii-Hemming P."/>
            <person name="Gingeras T.R."/>
            <person name="Gojobori T."/>
            <person name="Green R.E."/>
            <person name="Gustincich S."/>
            <person name="Harbers M."/>
            <person name="Hayashi Y."/>
            <person name="Hensch T.K."/>
            <person name="Hirokawa N."/>
            <person name="Hill D."/>
            <person name="Huminiecki L."/>
            <person name="Iacono M."/>
            <person name="Ikeo K."/>
            <person name="Iwama A."/>
            <person name="Ishikawa T."/>
            <person name="Jakt M."/>
            <person name="Kanapin A."/>
            <person name="Katoh M."/>
            <person name="Kawasawa Y."/>
            <person name="Kelso J."/>
            <person name="Kitamura H."/>
            <person name="Kitano H."/>
            <person name="Kollias G."/>
            <person name="Krishnan S.P."/>
            <person name="Kruger A."/>
            <person name="Kummerfeld S.K."/>
            <person name="Kurochkin I.V."/>
            <person name="Lareau L.F."/>
            <person name="Lazarevic D."/>
            <person name="Lipovich L."/>
            <person name="Liu J."/>
            <person name="Liuni S."/>
            <person name="McWilliam S."/>
            <person name="Madan Babu M."/>
            <person name="Madera M."/>
            <person name="Marchionni L."/>
            <person name="Matsuda H."/>
            <person name="Matsuzawa S."/>
            <person name="Miki H."/>
            <person name="Mignone F."/>
            <person name="Miyake S."/>
            <person name="Morris K."/>
            <person name="Mottagui-Tabar S."/>
            <person name="Mulder N."/>
            <person name="Nakano N."/>
            <person name="Nakauchi H."/>
            <person name="Ng P."/>
            <person name="Nilsson R."/>
            <person name="Nishiguchi S."/>
            <person name="Nishikawa S."/>
            <person name="Nori F."/>
            <person name="Ohara O."/>
            <person name="Okazaki Y."/>
            <person name="Orlando V."/>
            <person name="Pang K.C."/>
            <person name="Pavan W.J."/>
            <person name="Pavesi G."/>
            <person name="Pesole G."/>
            <person name="Petrovsky N."/>
            <person name="Piazza S."/>
            <person name="Reed J."/>
            <person name="Reid J.F."/>
            <person name="Ring B.Z."/>
            <person name="Ringwald M."/>
            <person name="Rost B."/>
            <person name="Ruan Y."/>
            <person name="Salzberg S.L."/>
            <person name="Sandelin A."/>
            <person name="Schneider C."/>
            <person name="Schoenbach C."/>
            <person name="Sekiguchi K."/>
            <person name="Semple C.A."/>
            <person name="Seno S."/>
            <person name="Sessa L."/>
            <person name="Sheng Y."/>
            <person name="Shibata Y."/>
            <person name="Shimada H."/>
            <person name="Shimada K."/>
            <person name="Silva D."/>
            <person name="Sinclair B."/>
            <person name="Sperling S."/>
            <person name="Stupka E."/>
            <person name="Sugiura K."/>
            <person name="Sultana R."/>
            <person name="Takenaka Y."/>
            <person name="Taki K."/>
            <person name="Tammoja K."/>
            <person name="Tan S.L."/>
            <person name="Tang S."/>
            <person name="Taylor M.S."/>
            <person name="Tegner J."/>
            <person name="Teichmann S.A."/>
            <person name="Ueda H.R."/>
            <person name="van Nimwegen E."/>
            <person name="Verardo R."/>
            <person name="Wei C.L."/>
            <person name="Yagi K."/>
            <person name="Yamanishi H."/>
            <person name="Zabarovsky E."/>
            <person name="Zhu S."/>
            <person name="Zimmer A."/>
            <person name="Hide W."/>
            <person name="Bult C."/>
            <person name="Grimmond S.M."/>
            <person name="Teasdale R.D."/>
            <person name="Liu E.T."/>
            <person name="Brusic V."/>
            <person name="Quackenbush J."/>
            <person name="Wahlestedt C."/>
            <person name="Mattick J.S."/>
            <person name="Hume D.A."/>
            <person name="Kai C."/>
            <person name="Sasaki D."/>
            <person name="Tomaru Y."/>
            <person name="Fukuda S."/>
            <person name="Kanamori-Katayama M."/>
            <person name="Suzuki M."/>
            <person name="Aoki J."/>
            <person name="Arakawa T."/>
            <person name="Iida J."/>
            <person name="Imamura K."/>
            <person name="Itoh M."/>
            <person name="Kato T."/>
            <person name="Kawaji H."/>
            <person name="Kawagashira N."/>
            <person name="Kawashima T."/>
            <person name="Kojima M."/>
            <person name="Kondo S."/>
            <person name="Konno H."/>
            <person name="Nakano K."/>
            <person name="Ninomiya N."/>
            <person name="Nishio T."/>
            <person name="Okada M."/>
            <person name="Plessy C."/>
            <person name="Shibata K."/>
            <person name="Shiraki T."/>
            <person name="Suzuki S."/>
            <person name="Tagami M."/>
            <person name="Waki K."/>
            <person name="Watahiki A."/>
            <person name="Okamura-Oho Y."/>
            <person name="Suzuki H."/>
            <person name="Kawai J."/>
            <person name="Hayashizaki Y."/>
        </authorList>
    </citation>
    <scope>NUCLEOTIDE SEQUENCE [LARGE SCALE MRNA]</scope>
    <source>
        <tissue>Mammary gland</tissue>
    </source>
</reference>
<reference key="2">
    <citation type="journal article" date="2010" name="Cell">
        <title>A tissue-specific atlas of mouse protein phosphorylation and expression.</title>
        <authorList>
            <person name="Huttlin E.L."/>
            <person name="Jedrychowski M.P."/>
            <person name="Elias J.E."/>
            <person name="Goswami T."/>
            <person name="Rad R."/>
            <person name="Beausoleil S.A."/>
            <person name="Villen J."/>
            <person name="Haas W."/>
            <person name="Sowa M.E."/>
            <person name="Gygi S.P."/>
        </authorList>
    </citation>
    <scope>PHOSPHORYLATION [LARGE SCALE ANALYSIS] AT SER-143</scope>
    <scope>IDENTIFICATION BY MASS SPECTROMETRY [LARGE SCALE ANALYSIS]</scope>
    <source>
        <tissue>Kidney</tissue>
    </source>
</reference>
<keyword id="KW-1015">Disulfide bond</keyword>
<keyword id="KW-0430">Lectin</keyword>
<keyword id="KW-0472">Membrane</keyword>
<keyword id="KW-0597">Phosphoprotein</keyword>
<keyword id="KW-1185">Reference proteome</keyword>
<keyword id="KW-0812">Transmembrane</keyword>
<keyword id="KW-1133">Transmembrane helix</keyword>
<sequence>MEPPQVPAEAPQPRASEDSPRPERTGWEEPDAQPQELPEKSPSPALSGSPRVPPLSLGYGAFRRLGSCSRELPSPSPSWAEQPRDGEAELEPWTASGEPAPASWAPVELQVDVRVKPVGAAGASRAPSPAPSTRFLTVPVPESPAFARRSAPTLQWLPRAPSPGSTWSRGSPLAANATESVSPAEGCMVPPGSPACRCRCREPGLTKEDDALLQRAGIDGKKLPRAITLIGLPQYMKSLRWALVVMAVLLAVCTVAVVALASRGGTKCQPCPQGWMWSQEQCYYLSEEAQDWEGSQAFCSAHHATLPLLSHTQDFLRKYRITKGSWVGARRGPEGWHWTDGVPLPYQLFPADSEDHPDFSCGGLEEGRLVALDCSSPRPWVCARETK</sequence>
<feature type="chain" id="PRO_0000316793" description="Killer cell lectin-like receptor subfamily G member 2">
    <location>
        <begin position="1"/>
        <end position="387"/>
    </location>
</feature>
<feature type="transmembrane region" description="Helical" evidence="1">
    <location>
        <begin position="241"/>
        <end position="261"/>
    </location>
</feature>
<feature type="domain" description="C-type lectin" evidence="2">
    <location>
        <begin position="278"/>
        <end position="383"/>
    </location>
</feature>
<feature type="region of interest" description="Disordered" evidence="3">
    <location>
        <begin position="1"/>
        <end position="105"/>
    </location>
</feature>
<feature type="region of interest" description="Disordered" evidence="3">
    <location>
        <begin position="155"/>
        <end position="174"/>
    </location>
</feature>
<feature type="compositionally biased region" description="Basic and acidic residues" evidence="3">
    <location>
        <begin position="15"/>
        <end position="27"/>
    </location>
</feature>
<feature type="modified residue" description="Phosphoserine" evidence="5">
    <location>
        <position position="143"/>
    </location>
</feature>
<feature type="disulfide bond" evidence="2">
    <location>
        <begin position="299"/>
        <end position="382"/>
    </location>
</feature>
<feature type="disulfide bond" evidence="2">
    <location>
        <begin position="361"/>
        <end position="374"/>
    </location>
</feature>
<feature type="sequence conflict" description="In Ref. 1; BAE41418." evidence="4" ref="1">
    <original>Y</original>
    <variation>S</variation>
    <location>
        <position position="346"/>
    </location>
</feature>
<proteinExistence type="evidence at protein level"/>
<dbReference type="EMBL" id="AK145064">
    <property type="protein sequence ID" value="BAE26215.1"/>
    <property type="molecule type" value="mRNA"/>
</dbReference>
<dbReference type="EMBL" id="AK169862">
    <property type="protein sequence ID" value="BAE41418.1"/>
    <property type="molecule type" value="mRNA"/>
</dbReference>
<dbReference type="CCDS" id="CCDS20016.1"/>
<dbReference type="SMR" id="Q3UM83"/>
<dbReference type="FunCoup" id="Q3UM83">
    <property type="interactions" value="6"/>
</dbReference>
<dbReference type="STRING" id="10090.ENSMUSP00000093732"/>
<dbReference type="iPTMnet" id="Q3UM83"/>
<dbReference type="PhosphoSitePlus" id="Q3UM83"/>
<dbReference type="PaxDb" id="10090-ENSMUSP00000093732"/>
<dbReference type="ProteomicsDB" id="265012"/>
<dbReference type="AGR" id="MGI:1921503"/>
<dbReference type="MGI" id="MGI:1921503">
    <property type="gene designation" value="Klrg2"/>
</dbReference>
<dbReference type="eggNOG" id="KOG4297">
    <property type="taxonomic scope" value="Eukaryota"/>
</dbReference>
<dbReference type="InParanoid" id="Q3UM83"/>
<dbReference type="PhylomeDB" id="Q3UM83"/>
<dbReference type="PRO" id="PR:Q3UM83"/>
<dbReference type="Proteomes" id="UP000000589">
    <property type="component" value="Unplaced"/>
</dbReference>
<dbReference type="RNAct" id="Q3UM83">
    <property type="molecule type" value="protein"/>
</dbReference>
<dbReference type="GO" id="GO:0016020">
    <property type="term" value="C:membrane"/>
    <property type="evidence" value="ECO:0007669"/>
    <property type="project" value="UniProtKB-SubCell"/>
</dbReference>
<dbReference type="GO" id="GO:0030246">
    <property type="term" value="F:carbohydrate binding"/>
    <property type="evidence" value="ECO:0007669"/>
    <property type="project" value="UniProtKB-KW"/>
</dbReference>
<dbReference type="CDD" id="cd03593">
    <property type="entry name" value="CLECT_NK_receptors_like"/>
    <property type="match status" value="1"/>
</dbReference>
<dbReference type="Gene3D" id="3.10.100.10">
    <property type="entry name" value="Mannose-Binding Protein A, subunit A"/>
    <property type="match status" value="1"/>
</dbReference>
<dbReference type="InterPro" id="IPR001304">
    <property type="entry name" value="C-type_lectin-like"/>
</dbReference>
<dbReference type="InterPro" id="IPR016186">
    <property type="entry name" value="C-type_lectin-like/link_sf"/>
</dbReference>
<dbReference type="InterPro" id="IPR016187">
    <property type="entry name" value="CTDL_fold"/>
</dbReference>
<dbReference type="InterPro" id="IPR043318">
    <property type="entry name" value="KLRG2"/>
</dbReference>
<dbReference type="InterPro" id="IPR033992">
    <property type="entry name" value="NKR-like_CTLD"/>
</dbReference>
<dbReference type="PANTHER" id="PTHR47606">
    <property type="entry name" value="KILLER CELL LECTIN-LIKE RECEPTOR SUBFAMILY G MEMBER 2"/>
    <property type="match status" value="1"/>
</dbReference>
<dbReference type="PANTHER" id="PTHR47606:SF1">
    <property type="entry name" value="KILLER CELL LECTIN-LIKE RECEPTOR SUBFAMILY G MEMBER 2"/>
    <property type="match status" value="1"/>
</dbReference>
<dbReference type="Pfam" id="PF00059">
    <property type="entry name" value="Lectin_C"/>
    <property type="match status" value="1"/>
</dbReference>
<dbReference type="SMART" id="SM00034">
    <property type="entry name" value="CLECT"/>
    <property type="match status" value="1"/>
</dbReference>
<dbReference type="SUPFAM" id="SSF56436">
    <property type="entry name" value="C-type lectin-like"/>
    <property type="match status" value="1"/>
</dbReference>
<dbReference type="PROSITE" id="PS50041">
    <property type="entry name" value="C_TYPE_LECTIN_2"/>
    <property type="match status" value="1"/>
</dbReference>
<comment type="subcellular location">
    <subcellularLocation>
        <location evidence="4">Membrane</location>
        <topology evidence="4">Single-pass membrane protein</topology>
    </subcellularLocation>
</comment>
<evidence type="ECO:0000255" key="1"/>
<evidence type="ECO:0000255" key="2">
    <source>
        <dbReference type="PROSITE-ProRule" id="PRU00040"/>
    </source>
</evidence>
<evidence type="ECO:0000256" key="3">
    <source>
        <dbReference type="SAM" id="MobiDB-lite"/>
    </source>
</evidence>
<evidence type="ECO:0000305" key="4"/>
<evidence type="ECO:0007744" key="5">
    <source>
    </source>
</evidence>
<organism>
    <name type="scientific">Mus musculus</name>
    <name type="common">Mouse</name>
    <dbReference type="NCBI Taxonomy" id="10090"/>
    <lineage>
        <taxon>Eukaryota</taxon>
        <taxon>Metazoa</taxon>
        <taxon>Chordata</taxon>
        <taxon>Craniata</taxon>
        <taxon>Vertebrata</taxon>
        <taxon>Euteleostomi</taxon>
        <taxon>Mammalia</taxon>
        <taxon>Eutheria</taxon>
        <taxon>Euarchontoglires</taxon>
        <taxon>Glires</taxon>
        <taxon>Rodentia</taxon>
        <taxon>Myomorpha</taxon>
        <taxon>Muroidea</taxon>
        <taxon>Muridae</taxon>
        <taxon>Murinae</taxon>
        <taxon>Mus</taxon>
        <taxon>Mus</taxon>
    </lineage>
</organism>
<protein>
    <recommendedName>
        <fullName>Killer cell lectin-like receptor subfamily G member 2</fullName>
    </recommendedName>
</protein>
<name>KLRG2_MOUSE</name>
<gene>
    <name type="primary">Klrg2</name>
</gene>